<feature type="chain" id="PRO_0000193177" description="2-succinylbenzoate--CoA ligase">
    <location>
        <begin position="1"/>
        <end position="452"/>
    </location>
</feature>
<reference key="1">
    <citation type="journal article" date="1995" name="Science">
        <title>Whole-genome random sequencing and assembly of Haemophilus influenzae Rd.</title>
        <authorList>
            <person name="Fleischmann R.D."/>
            <person name="Adams M.D."/>
            <person name="White O."/>
            <person name="Clayton R.A."/>
            <person name="Kirkness E.F."/>
            <person name="Kerlavage A.R."/>
            <person name="Bult C.J."/>
            <person name="Tomb J.-F."/>
            <person name="Dougherty B.A."/>
            <person name="Merrick J.M."/>
            <person name="McKenney K."/>
            <person name="Sutton G.G."/>
            <person name="FitzHugh W."/>
            <person name="Fields C.A."/>
            <person name="Gocayne J.D."/>
            <person name="Scott J.D."/>
            <person name="Shirley R."/>
            <person name="Liu L.-I."/>
            <person name="Glodek A."/>
            <person name="Kelley J.M."/>
            <person name="Weidman J.F."/>
            <person name="Phillips C.A."/>
            <person name="Spriggs T."/>
            <person name="Hedblom E."/>
            <person name="Cotton M.D."/>
            <person name="Utterback T.R."/>
            <person name="Hanna M.C."/>
            <person name="Nguyen D.T."/>
            <person name="Saudek D.M."/>
            <person name="Brandon R.C."/>
            <person name="Fine L.D."/>
            <person name="Fritchman J.L."/>
            <person name="Fuhrmann J.L."/>
            <person name="Geoghagen N.S.M."/>
            <person name="Gnehm C.L."/>
            <person name="McDonald L.A."/>
            <person name="Small K.V."/>
            <person name="Fraser C.M."/>
            <person name="Smith H.O."/>
            <person name="Venter J.C."/>
        </authorList>
    </citation>
    <scope>NUCLEOTIDE SEQUENCE [LARGE SCALE GENOMIC DNA]</scope>
    <source>
        <strain>ATCC 51907 / DSM 11121 / KW20 / Rd</strain>
    </source>
</reference>
<name>MENE_HAEIN</name>
<organism>
    <name type="scientific">Haemophilus influenzae (strain ATCC 51907 / DSM 11121 / KW20 / Rd)</name>
    <dbReference type="NCBI Taxonomy" id="71421"/>
    <lineage>
        <taxon>Bacteria</taxon>
        <taxon>Pseudomonadati</taxon>
        <taxon>Pseudomonadota</taxon>
        <taxon>Gammaproteobacteria</taxon>
        <taxon>Pasteurellales</taxon>
        <taxon>Pasteurellaceae</taxon>
        <taxon>Haemophilus</taxon>
    </lineage>
</organism>
<protein>
    <recommendedName>
        <fullName evidence="1">2-succinylbenzoate--CoA ligase</fullName>
        <ecNumber evidence="1">6.2.1.26</ecNumber>
    </recommendedName>
    <alternativeName>
        <fullName evidence="1">o-succinylbenzoyl-CoA synthetase</fullName>
        <shortName evidence="1">OSB-CoA synthetase</shortName>
    </alternativeName>
</protein>
<sequence>MYPWQDFAIQPDFSDKIALRTTQGDMLTWIELTTKINQTVAFLQKKGVNAESAVAFVGKNSEKILFLYLATIQLGAKVLGINPAFPQEKIAKLCEFYQIDFCFYDKDLLNLQEIDVFTQKADFFRPATMTLTSGSTGLPKAVVHNVQAHLDNAKGVCNLMKFDCNQSWLLSLPLYHVSGQGIVWRWLYCGAQLHFPEDDFYASLLKTTHVSLVPTQLQRLLDYLQENPSISFATRHILLGGAHIPTELTQNMLKYGIETYSGYGMTEMASTVFAKKSDRKQGVGQPLLGREYCLVNDEIWLKGAGLAMGYWKDRQIVPLTNNQGWIQTKDKGIWQEGELVIIGRLDNMFISGGENIQPEEIEQVIIQHSSVNQVFVLPQKNKEFGQRPVALVDFNEPFSKSAVENLMFFLQDKLARFKQPIAYYPLPLMLEKGIKISRKQLADWLAKRDEIN</sequence>
<accession>P44565</accession>
<evidence type="ECO:0000255" key="1">
    <source>
        <dbReference type="HAMAP-Rule" id="MF_00731"/>
    </source>
</evidence>
<keyword id="KW-0067">ATP-binding</keyword>
<keyword id="KW-0436">Ligase</keyword>
<keyword id="KW-0474">Menaquinone biosynthesis</keyword>
<keyword id="KW-0547">Nucleotide-binding</keyword>
<keyword id="KW-1185">Reference proteome</keyword>
<proteinExistence type="inferred from homology"/>
<comment type="function">
    <text evidence="1">Converts 2-succinylbenzoate (OSB) to 2-succinylbenzoyl-CoA (OSB-CoA).</text>
</comment>
<comment type="catalytic activity">
    <reaction evidence="1">
        <text>2-succinylbenzoate + ATP + CoA = 2-succinylbenzoyl-CoA + AMP + diphosphate</text>
        <dbReference type="Rhea" id="RHEA:17009"/>
        <dbReference type="ChEBI" id="CHEBI:18325"/>
        <dbReference type="ChEBI" id="CHEBI:30616"/>
        <dbReference type="ChEBI" id="CHEBI:33019"/>
        <dbReference type="ChEBI" id="CHEBI:57287"/>
        <dbReference type="ChEBI" id="CHEBI:57364"/>
        <dbReference type="ChEBI" id="CHEBI:456215"/>
        <dbReference type="EC" id="6.2.1.26"/>
    </reaction>
</comment>
<comment type="pathway">
    <text evidence="1">Quinol/quinone metabolism; 1,4-dihydroxy-2-naphthoate biosynthesis; 1,4-dihydroxy-2-naphthoate from chorismate: step 5/7.</text>
</comment>
<comment type="pathway">
    <text evidence="1">Quinol/quinone metabolism; menaquinone biosynthesis.</text>
</comment>
<comment type="similarity">
    <text evidence="1">Belongs to the ATP-dependent AMP-binding enzyme family. MenE subfamily.</text>
</comment>
<dbReference type="EC" id="6.2.1.26" evidence="1"/>
<dbReference type="EMBL" id="L42023">
    <property type="protein sequence ID" value="AAC21863.1"/>
    <property type="molecule type" value="Genomic_DNA"/>
</dbReference>
<dbReference type="PIR" id="F64053">
    <property type="entry name" value="F64053"/>
</dbReference>
<dbReference type="RefSeq" id="NP_438363.1">
    <property type="nucleotide sequence ID" value="NC_000907.1"/>
</dbReference>
<dbReference type="SMR" id="P44565"/>
<dbReference type="STRING" id="71421.HI_0194"/>
<dbReference type="EnsemblBacteria" id="AAC21863">
    <property type="protein sequence ID" value="AAC21863"/>
    <property type="gene ID" value="HI_0194"/>
</dbReference>
<dbReference type="KEGG" id="hin:HI_0194"/>
<dbReference type="PATRIC" id="fig|71421.8.peg.199"/>
<dbReference type="eggNOG" id="COG0318">
    <property type="taxonomic scope" value="Bacteria"/>
</dbReference>
<dbReference type="HOGENOM" id="CLU_000022_59_0_6"/>
<dbReference type="OrthoDB" id="9803968at2"/>
<dbReference type="PhylomeDB" id="P44565"/>
<dbReference type="BioCyc" id="HINF71421:G1GJ1-205-MONOMER"/>
<dbReference type="UniPathway" id="UPA00079"/>
<dbReference type="UniPathway" id="UPA01057">
    <property type="reaction ID" value="UER00166"/>
</dbReference>
<dbReference type="Proteomes" id="UP000000579">
    <property type="component" value="Chromosome"/>
</dbReference>
<dbReference type="GO" id="GO:0005524">
    <property type="term" value="F:ATP binding"/>
    <property type="evidence" value="ECO:0007669"/>
    <property type="project" value="UniProtKB-KW"/>
</dbReference>
<dbReference type="GO" id="GO:0008756">
    <property type="term" value="F:o-succinylbenzoate-CoA ligase activity"/>
    <property type="evidence" value="ECO:0000318"/>
    <property type="project" value="GO_Central"/>
</dbReference>
<dbReference type="GO" id="GO:0009234">
    <property type="term" value="P:menaquinone biosynthetic process"/>
    <property type="evidence" value="ECO:0000318"/>
    <property type="project" value="GO_Central"/>
</dbReference>
<dbReference type="CDD" id="cd17630">
    <property type="entry name" value="OSB_MenE-like"/>
    <property type="match status" value="1"/>
</dbReference>
<dbReference type="Gene3D" id="3.30.300.30">
    <property type="match status" value="1"/>
</dbReference>
<dbReference type="Gene3D" id="3.40.50.12780">
    <property type="entry name" value="N-terminal domain of ligase-like"/>
    <property type="match status" value="1"/>
</dbReference>
<dbReference type="HAMAP" id="MF_00731">
    <property type="entry name" value="MenE"/>
    <property type="match status" value="1"/>
</dbReference>
<dbReference type="InterPro" id="IPR045851">
    <property type="entry name" value="AMP-bd_C_sf"/>
</dbReference>
<dbReference type="InterPro" id="IPR020845">
    <property type="entry name" value="AMP-binding_CS"/>
</dbReference>
<dbReference type="InterPro" id="IPR000873">
    <property type="entry name" value="AMP-dep_synth/lig_dom"/>
</dbReference>
<dbReference type="InterPro" id="IPR042099">
    <property type="entry name" value="ANL_N_sf"/>
</dbReference>
<dbReference type="InterPro" id="IPR010192">
    <property type="entry name" value="MenE"/>
</dbReference>
<dbReference type="NCBIfam" id="TIGR01923">
    <property type="entry name" value="menE"/>
    <property type="match status" value="1"/>
</dbReference>
<dbReference type="NCBIfam" id="NF006539">
    <property type="entry name" value="PRK09029.1"/>
    <property type="match status" value="1"/>
</dbReference>
<dbReference type="PANTHER" id="PTHR43201">
    <property type="entry name" value="ACYL-COA SYNTHETASE"/>
    <property type="match status" value="1"/>
</dbReference>
<dbReference type="PANTHER" id="PTHR43201:SF5">
    <property type="entry name" value="MEDIUM-CHAIN ACYL-COA LIGASE ACSF2, MITOCHONDRIAL"/>
    <property type="match status" value="1"/>
</dbReference>
<dbReference type="Pfam" id="PF00501">
    <property type="entry name" value="AMP-binding"/>
    <property type="match status" value="2"/>
</dbReference>
<dbReference type="SUPFAM" id="SSF56801">
    <property type="entry name" value="Acetyl-CoA synthetase-like"/>
    <property type="match status" value="1"/>
</dbReference>
<dbReference type="PROSITE" id="PS00455">
    <property type="entry name" value="AMP_BINDING"/>
    <property type="match status" value="1"/>
</dbReference>
<gene>
    <name evidence="1" type="primary">menE</name>
    <name type="ordered locus">HI_0194</name>
</gene>